<evidence type="ECO:0000255" key="1">
    <source>
        <dbReference type="HAMAP-Rule" id="MF_01695"/>
    </source>
</evidence>
<dbReference type="EC" id="2.4.1.250" evidence="1"/>
<dbReference type="EMBL" id="AP008957">
    <property type="protein sequence ID" value="BAH32325.1"/>
    <property type="molecule type" value="Genomic_DNA"/>
</dbReference>
<dbReference type="RefSeq" id="WP_020906764.1">
    <property type="nucleotide sequence ID" value="NC_012490.1"/>
</dbReference>
<dbReference type="SMR" id="C0ZUT0"/>
<dbReference type="CAZy" id="GT4">
    <property type="family name" value="Glycosyltransferase Family 4"/>
</dbReference>
<dbReference type="KEGG" id="rer:RER_16170"/>
<dbReference type="PATRIC" id="fig|234621.6.peg.2103"/>
<dbReference type="eggNOG" id="COG0438">
    <property type="taxonomic scope" value="Bacteria"/>
</dbReference>
<dbReference type="HOGENOM" id="CLU_009583_2_3_11"/>
<dbReference type="Proteomes" id="UP000002204">
    <property type="component" value="Chromosome"/>
</dbReference>
<dbReference type="GO" id="GO:0008375">
    <property type="term" value="F:acetylglucosaminyltransferase activity"/>
    <property type="evidence" value="ECO:0007669"/>
    <property type="project" value="UniProtKB-UniRule"/>
</dbReference>
<dbReference type="GO" id="GO:0102710">
    <property type="term" value="F:D-inositol-3-phosphate glycosyltransferase activity"/>
    <property type="evidence" value="ECO:0007669"/>
    <property type="project" value="UniProtKB-EC"/>
</dbReference>
<dbReference type="GO" id="GO:0000287">
    <property type="term" value="F:magnesium ion binding"/>
    <property type="evidence" value="ECO:0007669"/>
    <property type="project" value="UniProtKB-UniRule"/>
</dbReference>
<dbReference type="GO" id="GO:0010125">
    <property type="term" value="P:mycothiol biosynthetic process"/>
    <property type="evidence" value="ECO:0007669"/>
    <property type="project" value="UniProtKB-UniRule"/>
</dbReference>
<dbReference type="CDD" id="cd03800">
    <property type="entry name" value="GT4_sucrose_synthase"/>
    <property type="match status" value="1"/>
</dbReference>
<dbReference type="Gene3D" id="3.40.50.2000">
    <property type="entry name" value="Glycogen Phosphorylase B"/>
    <property type="match status" value="2"/>
</dbReference>
<dbReference type="HAMAP" id="MF_01695">
    <property type="entry name" value="MshA"/>
    <property type="match status" value="1"/>
</dbReference>
<dbReference type="InterPro" id="IPR001296">
    <property type="entry name" value="Glyco_trans_1"/>
</dbReference>
<dbReference type="InterPro" id="IPR028098">
    <property type="entry name" value="Glyco_trans_4-like_N"/>
</dbReference>
<dbReference type="InterPro" id="IPR017814">
    <property type="entry name" value="Mycothiol_biosynthesis_MshA"/>
</dbReference>
<dbReference type="NCBIfam" id="TIGR03449">
    <property type="entry name" value="mycothiol_MshA"/>
    <property type="match status" value="1"/>
</dbReference>
<dbReference type="PANTHER" id="PTHR12526:SF510">
    <property type="entry name" value="D-INOSITOL 3-PHOSPHATE GLYCOSYLTRANSFERASE"/>
    <property type="match status" value="1"/>
</dbReference>
<dbReference type="PANTHER" id="PTHR12526">
    <property type="entry name" value="GLYCOSYLTRANSFERASE"/>
    <property type="match status" value="1"/>
</dbReference>
<dbReference type="Pfam" id="PF13579">
    <property type="entry name" value="Glyco_trans_4_4"/>
    <property type="match status" value="1"/>
</dbReference>
<dbReference type="Pfam" id="PF00534">
    <property type="entry name" value="Glycos_transf_1"/>
    <property type="match status" value="1"/>
</dbReference>
<dbReference type="SUPFAM" id="SSF53756">
    <property type="entry name" value="UDP-Glycosyltransferase/glycogen phosphorylase"/>
    <property type="match status" value="1"/>
</dbReference>
<keyword id="KW-0328">Glycosyltransferase</keyword>
<keyword id="KW-0460">Magnesium</keyword>
<keyword id="KW-0479">Metal-binding</keyword>
<keyword id="KW-0808">Transferase</keyword>
<reference key="1">
    <citation type="submission" date="2005-03" db="EMBL/GenBank/DDBJ databases">
        <title>Comparison of the complete genome sequences of Rhodococcus erythropolis PR4 and Rhodococcus opacus B4.</title>
        <authorList>
            <person name="Takarada H."/>
            <person name="Sekine M."/>
            <person name="Hosoyama A."/>
            <person name="Yamada R."/>
            <person name="Fujisawa T."/>
            <person name="Omata S."/>
            <person name="Shimizu A."/>
            <person name="Tsukatani N."/>
            <person name="Tanikawa S."/>
            <person name="Fujita N."/>
            <person name="Harayama S."/>
        </authorList>
    </citation>
    <scope>NUCLEOTIDE SEQUENCE [LARGE SCALE GENOMIC DNA]</scope>
    <source>
        <strain>PR4 / NBRC 100887</strain>
    </source>
</reference>
<comment type="function">
    <text evidence="1">Catalyzes the transfer of a N-acetyl-glucosamine moiety to 1D-myo-inositol 3-phosphate to produce 1D-myo-inositol 2-acetamido-2-deoxy-glucopyranoside 3-phosphate in the mycothiol biosynthesis pathway.</text>
</comment>
<comment type="catalytic activity">
    <reaction evidence="1">
        <text>1D-myo-inositol 3-phosphate + UDP-N-acetyl-alpha-D-glucosamine = 1D-myo-inositol 2-acetamido-2-deoxy-alpha-D-glucopyranoside 3-phosphate + UDP + H(+)</text>
        <dbReference type="Rhea" id="RHEA:26188"/>
        <dbReference type="ChEBI" id="CHEBI:15378"/>
        <dbReference type="ChEBI" id="CHEBI:57705"/>
        <dbReference type="ChEBI" id="CHEBI:58223"/>
        <dbReference type="ChEBI" id="CHEBI:58401"/>
        <dbReference type="ChEBI" id="CHEBI:58892"/>
        <dbReference type="EC" id="2.4.1.250"/>
    </reaction>
</comment>
<comment type="subunit">
    <text evidence="1">Homodimer.</text>
</comment>
<comment type="similarity">
    <text evidence="1">Belongs to the glycosyltransferase group 1 family. MshA subfamily.</text>
</comment>
<name>MSHA_RHOE4</name>
<gene>
    <name evidence="1" type="primary">mshA</name>
    <name type="ordered locus">RER_16170</name>
</gene>
<accession>C0ZUT0</accession>
<protein>
    <recommendedName>
        <fullName>D-inositol 3-phosphate glycosyltransferase</fullName>
        <ecNumber evidence="1">2.4.1.250</ecNumber>
    </recommendedName>
    <alternativeName>
        <fullName evidence="1">N-acetylglucosamine-inositol-phosphate N-acetylglucosaminyltransferase</fullName>
        <shortName evidence="1">GlcNAc-Ins-P N-acetylglucosaminyltransferase</shortName>
    </alternativeName>
</protein>
<sequence length="442" mass="46924">MHISRPRRVAVLSVHTSPLAQPGTGDAGGMNVYVLQSAIQLAKRGVEVEIFTRATSSADAPVVDAAPGVRVRNIAAGPFEGLDKADLPTQLCAFVAGVLREEARHEPGYYSLIHSHYWLSGQVGWLARDRWGVPLVHTAHTLAAVKNLSLAEGDTPEPAARQIGEQQVVAESDRLVANTTDEAKALHELYGADPTRIDVVAPGADLTRYRPGDRDSARASLGLDPGEIVVTFVGRIQPLKAPDVLLRAAAEVISRSPGLPLRILVVGGPSGTGLARPDVLIELARSLGITAQVTFLPPQAPERLADVYRASDLVAVPSYSESFGLVAIEAQACGTPVIAADVGGLGVAVRNGETGLLVQGHRTEDWAGALESLVTAPTRLAELAAQAPRHAENFSWEHTADGLLESYRKAAVNYNNGTGPSDFSPRRARGLWRLRRTGGVRT</sequence>
<organism>
    <name type="scientific">Rhodococcus erythropolis (strain PR4 / NBRC 100887)</name>
    <dbReference type="NCBI Taxonomy" id="234621"/>
    <lineage>
        <taxon>Bacteria</taxon>
        <taxon>Bacillati</taxon>
        <taxon>Actinomycetota</taxon>
        <taxon>Actinomycetes</taxon>
        <taxon>Mycobacteriales</taxon>
        <taxon>Nocardiaceae</taxon>
        <taxon>Rhodococcus</taxon>
        <taxon>Rhodococcus erythropolis group</taxon>
    </lineage>
</organism>
<proteinExistence type="inferred from homology"/>
<feature type="chain" id="PRO_0000400150" description="D-inositol 3-phosphate glycosyltransferase">
    <location>
        <begin position="1"/>
        <end position="442"/>
    </location>
</feature>
<feature type="binding site" evidence="1">
    <location>
        <position position="15"/>
    </location>
    <ligand>
        <name>1D-myo-inositol 3-phosphate</name>
        <dbReference type="ChEBI" id="CHEBI:58401"/>
    </ligand>
</feature>
<feature type="binding site" evidence="1">
    <location>
        <begin position="21"/>
        <end position="22"/>
    </location>
    <ligand>
        <name>UDP-N-acetyl-alpha-D-glucosamine</name>
        <dbReference type="ChEBI" id="CHEBI:57705"/>
    </ligand>
</feature>
<feature type="binding site" evidence="1">
    <location>
        <begin position="26"/>
        <end position="31"/>
    </location>
    <ligand>
        <name>1D-myo-inositol 3-phosphate</name>
        <dbReference type="ChEBI" id="CHEBI:58401"/>
    </ligand>
</feature>
<feature type="binding site" evidence="1">
    <location>
        <position position="29"/>
    </location>
    <ligand>
        <name>UDP-N-acetyl-alpha-D-glucosamine</name>
        <dbReference type="ChEBI" id="CHEBI:57705"/>
    </ligand>
</feature>
<feature type="binding site" evidence="1">
    <location>
        <position position="84"/>
    </location>
    <ligand>
        <name>1D-myo-inositol 3-phosphate</name>
        <dbReference type="ChEBI" id="CHEBI:58401"/>
    </ligand>
</feature>
<feature type="binding site" evidence="1">
    <location>
        <position position="117"/>
    </location>
    <ligand>
        <name>1D-myo-inositol 3-phosphate</name>
        <dbReference type="ChEBI" id="CHEBI:58401"/>
    </ligand>
</feature>
<feature type="binding site" evidence="1">
    <location>
        <position position="141"/>
    </location>
    <ligand>
        <name>1D-myo-inositol 3-phosphate</name>
        <dbReference type="ChEBI" id="CHEBI:58401"/>
    </ligand>
</feature>
<feature type="binding site" evidence="1">
    <location>
        <position position="161"/>
    </location>
    <ligand>
        <name>1D-myo-inositol 3-phosphate</name>
        <dbReference type="ChEBI" id="CHEBI:58401"/>
    </ligand>
</feature>
<feature type="binding site" evidence="1">
    <location>
        <position position="235"/>
    </location>
    <ligand>
        <name>UDP-N-acetyl-alpha-D-glucosamine</name>
        <dbReference type="ChEBI" id="CHEBI:57705"/>
    </ligand>
</feature>
<feature type="binding site" evidence="1">
    <location>
        <position position="240"/>
    </location>
    <ligand>
        <name>UDP-N-acetyl-alpha-D-glucosamine</name>
        <dbReference type="ChEBI" id="CHEBI:57705"/>
    </ligand>
</feature>
<feature type="binding site" evidence="1">
    <location>
        <position position="299"/>
    </location>
    <ligand>
        <name>UDP-N-acetyl-alpha-D-glucosamine</name>
        <dbReference type="ChEBI" id="CHEBI:57705"/>
    </ligand>
</feature>
<feature type="binding site" evidence="1">
    <location>
        <position position="308"/>
    </location>
    <ligand>
        <name>Mg(2+)</name>
        <dbReference type="ChEBI" id="CHEBI:18420"/>
    </ligand>
</feature>
<feature type="binding site" evidence="1">
    <location>
        <position position="309"/>
    </location>
    <ligand>
        <name>Mg(2+)</name>
        <dbReference type="ChEBI" id="CHEBI:18420"/>
    </ligand>
</feature>
<feature type="binding site" evidence="1">
    <location>
        <position position="311"/>
    </location>
    <ligand>
        <name>Mg(2+)</name>
        <dbReference type="ChEBI" id="CHEBI:18420"/>
    </ligand>
</feature>
<feature type="binding site" evidence="1">
    <location>
        <position position="321"/>
    </location>
    <ligand>
        <name>UDP-N-acetyl-alpha-D-glucosamine</name>
        <dbReference type="ChEBI" id="CHEBI:57705"/>
    </ligand>
</feature>
<feature type="binding site" evidence="1">
    <location>
        <position position="329"/>
    </location>
    <ligand>
        <name>UDP-N-acetyl-alpha-D-glucosamine</name>
        <dbReference type="ChEBI" id="CHEBI:57705"/>
    </ligand>
</feature>
<feature type="binding site" evidence="1">
    <location>
        <position position="335"/>
    </location>
    <ligand>
        <name>Mg(2+)</name>
        <dbReference type="ChEBI" id="CHEBI:18420"/>
    </ligand>
</feature>